<feature type="chain" id="PRO_0000354656" description="Large ribosomal subunit protein uL16c">
    <location>
        <begin position="1"/>
        <end position="135"/>
    </location>
</feature>
<protein>
    <recommendedName>
        <fullName evidence="1">Large ribosomal subunit protein uL16c</fullName>
    </recommendedName>
    <alternativeName>
        <fullName evidence="2">50S ribosomal protein L16, chloroplastic</fullName>
    </alternativeName>
</protein>
<geneLocation type="chloroplast"/>
<accession>Q09G08</accession>
<dbReference type="EMBL" id="DQ923116">
    <property type="protein sequence ID" value="ABI49817.1"/>
    <property type="molecule type" value="Genomic_DNA"/>
</dbReference>
<dbReference type="RefSeq" id="YP_740603.1">
    <property type="nucleotide sequence ID" value="NC_008335.1"/>
</dbReference>
<dbReference type="SMR" id="Q09G08"/>
<dbReference type="GeneID" id="4271278"/>
<dbReference type="GO" id="GO:0009507">
    <property type="term" value="C:chloroplast"/>
    <property type="evidence" value="ECO:0007669"/>
    <property type="project" value="UniProtKB-SubCell"/>
</dbReference>
<dbReference type="GO" id="GO:0005762">
    <property type="term" value="C:mitochondrial large ribosomal subunit"/>
    <property type="evidence" value="ECO:0007669"/>
    <property type="project" value="TreeGrafter"/>
</dbReference>
<dbReference type="GO" id="GO:0019843">
    <property type="term" value="F:rRNA binding"/>
    <property type="evidence" value="ECO:0007669"/>
    <property type="project" value="InterPro"/>
</dbReference>
<dbReference type="GO" id="GO:0003735">
    <property type="term" value="F:structural constituent of ribosome"/>
    <property type="evidence" value="ECO:0007669"/>
    <property type="project" value="InterPro"/>
</dbReference>
<dbReference type="GO" id="GO:0032543">
    <property type="term" value="P:mitochondrial translation"/>
    <property type="evidence" value="ECO:0007669"/>
    <property type="project" value="TreeGrafter"/>
</dbReference>
<dbReference type="CDD" id="cd01433">
    <property type="entry name" value="Ribosomal_L16_L10e"/>
    <property type="match status" value="1"/>
</dbReference>
<dbReference type="FunFam" id="3.90.1170.10:FF:000001">
    <property type="entry name" value="50S ribosomal protein L16"/>
    <property type="match status" value="1"/>
</dbReference>
<dbReference type="Gene3D" id="3.90.1170.10">
    <property type="entry name" value="Ribosomal protein L10e/L16"/>
    <property type="match status" value="1"/>
</dbReference>
<dbReference type="HAMAP" id="MF_01342">
    <property type="entry name" value="Ribosomal_uL16"/>
    <property type="match status" value="1"/>
</dbReference>
<dbReference type="InterPro" id="IPR047873">
    <property type="entry name" value="Ribosomal_uL16"/>
</dbReference>
<dbReference type="InterPro" id="IPR000114">
    <property type="entry name" value="Ribosomal_uL16_bact-type"/>
</dbReference>
<dbReference type="InterPro" id="IPR020798">
    <property type="entry name" value="Ribosomal_uL16_CS"/>
</dbReference>
<dbReference type="InterPro" id="IPR016180">
    <property type="entry name" value="Ribosomal_uL16_dom"/>
</dbReference>
<dbReference type="InterPro" id="IPR036920">
    <property type="entry name" value="Ribosomal_uL16_sf"/>
</dbReference>
<dbReference type="NCBIfam" id="TIGR01164">
    <property type="entry name" value="rplP_bact"/>
    <property type="match status" value="1"/>
</dbReference>
<dbReference type="PANTHER" id="PTHR12220">
    <property type="entry name" value="50S/60S RIBOSOMAL PROTEIN L16"/>
    <property type="match status" value="1"/>
</dbReference>
<dbReference type="PANTHER" id="PTHR12220:SF13">
    <property type="entry name" value="LARGE RIBOSOMAL SUBUNIT PROTEIN UL16M"/>
    <property type="match status" value="1"/>
</dbReference>
<dbReference type="Pfam" id="PF00252">
    <property type="entry name" value="Ribosomal_L16"/>
    <property type="match status" value="1"/>
</dbReference>
<dbReference type="PRINTS" id="PR00060">
    <property type="entry name" value="RIBOSOMALL16"/>
</dbReference>
<dbReference type="SUPFAM" id="SSF54686">
    <property type="entry name" value="Ribosomal protein L16p/L10e"/>
    <property type="match status" value="1"/>
</dbReference>
<dbReference type="PROSITE" id="PS00586">
    <property type="entry name" value="RIBOSOMAL_L16_1"/>
    <property type="match status" value="1"/>
</dbReference>
<dbReference type="PROSITE" id="PS00701">
    <property type="entry name" value="RIBOSOMAL_L16_2"/>
    <property type="match status" value="1"/>
</dbReference>
<evidence type="ECO:0000255" key="1">
    <source>
        <dbReference type="HAMAP-Rule" id="MF_01342"/>
    </source>
</evidence>
<evidence type="ECO:0000305" key="2"/>
<gene>
    <name evidence="1" type="primary">rpl16</name>
</gene>
<name>RK16_PLAOC</name>
<sequence>MLSPKRTRFRKQHRGRMKGISYRGNRISFGRYALRALEPAWITSRQIEAGRRAMTRYARRGGKIWVRIFPDKPVTVRPTETRMGSGKGSPEYWVSVVKPGRILYEMGGISEIVAREAISIAASKMPIRTQFVIAG</sequence>
<comment type="subunit">
    <text evidence="1">Part of the 50S ribosomal subunit.</text>
</comment>
<comment type="subcellular location">
    <subcellularLocation>
        <location>Plastid</location>
        <location>Chloroplast</location>
    </subcellularLocation>
</comment>
<comment type="similarity">
    <text evidence="1">Belongs to the universal ribosomal protein uL16 family.</text>
</comment>
<organism>
    <name type="scientific">Platanus occidentalis</name>
    <name type="common">Sycamore</name>
    <name type="synonym">American plane tree</name>
    <dbReference type="NCBI Taxonomy" id="4403"/>
    <lineage>
        <taxon>Eukaryota</taxon>
        <taxon>Viridiplantae</taxon>
        <taxon>Streptophyta</taxon>
        <taxon>Embryophyta</taxon>
        <taxon>Tracheophyta</taxon>
        <taxon>Spermatophyta</taxon>
        <taxon>Magnoliopsida</taxon>
        <taxon>Proteales</taxon>
        <taxon>Platanaceae</taxon>
        <taxon>Platanus</taxon>
    </lineage>
</organism>
<keyword id="KW-0150">Chloroplast</keyword>
<keyword id="KW-0934">Plastid</keyword>
<keyword id="KW-0687">Ribonucleoprotein</keyword>
<keyword id="KW-0689">Ribosomal protein</keyword>
<reference key="1">
    <citation type="journal article" date="2006" name="BMC Plant Biol.">
        <title>Rapid and accurate pyrosequencing of angiosperm plastid genomes.</title>
        <authorList>
            <person name="Moore M.J."/>
            <person name="Dhingra A."/>
            <person name="Soltis P.S."/>
            <person name="Shaw R."/>
            <person name="Farmerie W.G."/>
            <person name="Folta K.M."/>
            <person name="Soltis D.E."/>
        </authorList>
    </citation>
    <scope>NUCLEOTIDE SEQUENCE [LARGE SCALE GENOMIC DNA]</scope>
</reference>
<proteinExistence type="inferred from homology"/>